<feature type="chain" id="PRO_1000119240" description="Deoxyuridine 5'-triphosphate nucleotidohydrolase">
    <location>
        <begin position="1"/>
        <end position="150"/>
    </location>
</feature>
<feature type="binding site" evidence="1">
    <location>
        <begin position="69"/>
        <end position="71"/>
    </location>
    <ligand>
        <name>substrate</name>
    </ligand>
</feature>
<feature type="binding site" evidence="1">
    <location>
        <position position="82"/>
    </location>
    <ligand>
        <name>substrate</name>
    </ligand>
</feature>
<feature type="binding site" evidence="1">
    <location>
        <begin position="86"/>
        <end position="88"/>
    </location>
    <ligand>
        <name>substrate</name>
    </ligand>
</feature>
<gene>
    <name evidence="1" type="primary">dut</name>
    <name type="ordered locus">Mfla_0313</name>
</gene>
<proteinExistence type="inferred from homology"/>
<evidence type="ECO:0000255" key="1">
    <source>
        <dbReference type="HAMAP-Rule" id="MF_00116"/>
    </source>
</evidence>
<protein>
    <recommendedName>
        <fullName evidence="1">Deoxyuridine 5'-triphosphate nucleotidohydrolase</fullName>
        <shortName evidence="1">dUTPase</shortName>
        <ecNumber evidence="1">3.6.1.23</ecNumber>
    </recommendedName>
    <alternativeName>
        <fullName evidence="1">dUTP pyrophosphatase</fullName>
    </alternativeName>
</protein>
<accession>Q1H4K3</accession>
<comment type="function">
    <text evidence="1">This enzyme is involved in nucleotide metabolism: it produces dUMP, the immediate precursor of thymidine nucleotides and it decreases the intracellular concentration of dUTP so that uracil cannot be incorporated into DNA.</text>
</comment>
<comment type="catalytic activity">
    <reaction evidence="1">
        <text>dUTP + H2O = dUMP + diphosphate + H(+)</text>
        <dbReference type="Rhea" id="RHEA:10248"/>
        <dbReference type="ChEBI" id="CHEBI:15377"/>
        <dbReference type="ChEBI" id="CHEBI:15378"/>
        <dbReference type="ChEBI" id="CHEBI:33019"/>
        <dbReference type="ChEBI" id="CHEBI:61555"/>
        <dbReference type="ChEBI" id="CHEBI:246422"/>
        <dbReference type="EC" id="3.6.1.23"/>
    </reaction>
</comment>
<comment type="cofactor">
    <cofactor evidence="1">
        <name>Mg(2+)</name>
        <dbReference type="ChEBI" id="CHEBI:18420"/>
    </cofactor>
</comment>
<comment type="pathway">
    <text evidence="1">Pyrimidine metabolism; dUMP biosynthesis; dUMP from dCTP (dUTP route): step 2/2.</text>
</comment>
<comment type="similarity">
    <text evidence="1">Belongs to the dUTPase family.</text>
</comment>
<keyword id="KW-0378">Hydrolase</keyword>
<keyword id="KW-0460">Magnesium</keyword>
<keyword id="KW-0479">Metal-binding</keyword>
<keyword id="KW-0546">Nucleotide metabolism</keyword>
<keyword id="KW-1185">Reference proteome</keyword>
<sequence length="150" mass="16197">MSLTIDVKILDNRLHHMLPSYATPGSAGLDLRACTEHTQTLAPGETIMIPTGMAIHLADPHYAALILPRSGLGHKHGIVLGNLVGLIDSDYQGQLLVSCWNRGKESFILNPLERIAQLVIVPVMQANFNIVDDFQASERGTGGFGSTGRQ</sequence>
<reference key="1">
    <citation type="submission" date="2006-03" db="EMBL/GenBank/DDBJ databases">
        <title>Complete sequence of Methylobacillus flagellatus KT.</title>
        <authorList>
            <consortium name="US DOE Joint Genome Institute"/>
            <person name="Copeland A."/>
            <person name="Lucas S."/>
            <person name="Lapidus A."/>
            <person name="Barry K."/>
            <person name="Detter J.C."/>
            <person name="Glavina del Rio T."/>
            <person name="Hammon N."/>
            <person name="Israni S."/>
            <person name="Dalin E."/>
            <person name="Tice H."/>
            <person name="Pitluck S."/>
            <person name="Brettin T."/>
            <person name="Bruce D."/>
            <person name="Han C."/>
            <person name="Tapia R."/>
            <person name="Saunders E."/>
            <person name="Gilna P."/>
            <person name="Schmutz J."/>
            <person name="Larimer F."/>
            <person name="Land M."/>
            <person name="Kyrpides N."/>
            <person name="Anderson I."/>
            <person name="Richardson P."/>
        </authorList>
    </citation>
    <scope>NUCLEOTIDE SEQUENCE [LARGE SCALE GENOMIC DNA]</scope>
    <source>
        <strain>ATCC 51484 / DSM 6875 / VKM B-1610 / KT</strain>
    </source>
</reference>
<name>DUT_METFK</name>
<organism>
    <name type="scientific">Methylobacillus flagellatus (strain ATCC 51484 / DSM 6875 / VKM B-1610 / KT)</name>
    <dbReference type="NCBI Taxonomy" id="265072"/>
    <lineage>
        <taxon>Bacteria</taxon>
        <taxon>Pseudomonadati</taxon>
        <taxon>Pseudomonadota</taxon>
        <taxon>Betaproteobacteria</taxon>
        <taxon>Nitrosomonadales</taxon>
        <taxon>Methylophilaceae</taxon>
        <taxon>Methylobacillus</taxon>
    </lineage>
</organism>
<dbReference type="EC" id="3.6.1.23" evidence="1"/>
<dbReference type="EMBL" id="CP000284">
    <property type="protein sequence ID" value="ABE48584.1"/>
    <property type="molecule type" value="Genomic_DNA"/>
</dbReference>
<dbReference type="RefSeq" id="WP_011478681.1">
    <property type="nucleotide sequence ID" value="NC_007947.1"/>
</dbReference>
<dbReference type="SMR" id="Q1H4K3"/>
<dbReference type="STRING" id="265072.Mfla_0313"/>
<dbReference type="KEGG" id="mfa:Mfla_0313"/>
<dbReference type="eggNOG" id="COG0756">
    <property type="taxonomic scope" value="Bacteria"/>
</dbReference>
<dbReference type="HOGENOM" id="CLU_068508_1_1_4"/>
<dbReference type="OrthoDB" id="9809956at2"/>
<dbReference type="UniPathway" id="UPA00610">
    <property type="reaction ID" value="UER00666"/>
</dbReference>
<dbReference type="Proteomes" id="UP000002440">
    <property type="component" value="Chromosome"/>
</dbReference>
<dbReference type="GO" id="GO:0004170">
    <property type="term" value="F:dUTP diphosphatase activity"/>
    <property type="evidence" value="ECO:0007669"/>
    <property type="project" value="UniProtKB-UniRule"/>
</dbReference>
<dbReference type="GO" id="GO:0000287">
    <property type="term" value="F:magnesium ion binding"/>
    <property type="evidence" value="ECO:0007669"/>
    <property type="project" value="UniProtKB-UniRule"/>
</dbReference>
<dbReference type="GO" id="GO:0006226">
    <property type="term" value="P:dUMP biosynthetic process"/>
    <property type="evidence" value="ECO:0007669"/>
    <property type="project" value="UniProtKB-UniRule"/>
</dbReference>
<dbReference type="GO" id="GO:0046081">
    <property type="term" value="P:dUTP catabolic process"/>
    <property type="evidence" value="ECO:0007669"/>
    <property type="project" value="InterPro"/>
</dbReference>
<dbReference type="CDD" id="cd07557">
    <property type="entry name" value="trimeric_dUTPase"/>
    <property type="match status" value="1"/>
</dbReference>
<dbReference type="FunFam" id="2.70.40.10:FF:000002">
    <property type="entry name" value="dUTP diphosphatase"/>
    <property type="match status" value="1"/>
</dbReference>
<dbReference type="Gene3D" id="2.70.40.10">
    <property type="match status" value="1"/>
</dbReference>
<dbReference type="HAMAP" id="MF_00116">
    <property type="entry name" value="dUTPase_bact"/>
    <property type="match status" value="1"/>
</dbReference>
<dbReference type="InterPro" id="IPR008181">
    <property type="entry name" value="dUTPase"/>
</dbReference>
<dbReference type="InterPro" id="IPR029054">
    <property type="entry name" value="dUTPase-like"/>
</dbReference>
<dbReference type="InterPro" id="IPR036157">
    <property type="entry name" value="dUTPase-like_sf"/>
</dbReference>
<dbReference type="InterPro" id="IPR033704">
    <property type="entry name" value="dUTPase_trimeric"/>
</dbReference>
<dbReference type="NCBIfam" id="TIGR00576">
    <property type="entry name" value="dut"/>
    <property type="match status" value="1"/>
</dbReference>
<dbReference type="NCBIfam" id="NF001862">
    <property type="entry name" value="PRK00601.1"/>
    <property type="match status" value="1"/>
</dbReference>
<dbReference type="PANTHER" id="PTHR11241">
    <property type="entry name" value="DEOXYURIDINE 5'-TRIPHOSPHATE NUCLEOTIDOHYDROLASE"/>
    <property type="match status" value="1"/>
</dbReference>
<dbReference type="PANTHER" id="PTHR11241:SF0">
    <property type="entry name" value="DEOXYURIDINE 5'-TRIPHOSPHATE NUCLEOTIDOHYDROLASE"/>
    <property type="match status" value="1"/>
</dbReference>
<dbReference type="Pfam" id="PF00692">
    <property type="entry name" value="dUTPase"/>
    <property type="match status" value="1"/>
</dbReference>
<dbReference type="SUPFAM" id="SSF51283">
    <property type="entry name" value="dUTPase-like"/>
    <property type="match status" value="1"/>
</dbReference>